<gene>
    <name type="primary">dbp8</name>
    <name type="ORF">ATEG_04613</name>
</gene>
<organism>
    <name type="scientific">Aspergillus terreus (strain NIH 2624 / FGSC A1156)</name>
    <dbReference type="NCBI Taxonomy" id="341663"/>
    <lineage>
        <taxon>Eukaryota</taxon>
        <taxon>Fungi</taxon>
        <taxon>Dikarya</taxon>
        <taxon>Ascomycota</taxon>
        <taxon>Pezizomycotina</taxon>
        <taxon>Eurotiomycetes</taxon>
        <taxon>Eurotiomycetidae</taxon>
        <taxon>Eurotiales</taxon>
        <taxon>Aspergillaceae</taxon>
        <taxon>Aspergillus</taxon>
        <taxon>Aspergillus subgen. Circumdati</taxon>
    </lineage>
</organism>
<sequence>MENDHSSSDEHEHENPELQTRAPKRRRLSETSEDDEYVAAPTPLPTLSRIKKKEPKDENKDTSTGTDNPVLIKDALEMGLQDAGESSFKALNVAPWLIGSLTTMAVRKPTAIQRACIPEILKGRDCIGGSRTGSGKTIAFAVPILQKWAEDPFGIFAVVLTPTRELALQIYEQFKAISAPQSMKPVLITGGTDMRPQALALSQRPHVVIATPGRLADHIQTSGEDTVRGLKRVRMVVLDEADRLLAPGPGSMLPDVETCLSALPPSSERQTLLFTATVTPEVRALKSMPRASTKPPVFVTEIEAGGTTSAGADGAAPKSTLPPTLKQTYLKVPMTHREAFLHVLLSTDGNAGKPAIIFCNHTKTADLLERLLRRLAHRVTSLHSLLPQSERSSNLARFRASAARILVATDVASRGLDIPSVALVVNYDVPRNPDDYVHRVGRTARAGRRGEAVTLVGQRDVQLVLAIEERVGRQMEEWSEEGVSVEGRVVRTGVLKEVGSAKREALIEIEEGRDVLGRKRNKLKKVR</sequence>
<evidence type="ECO:0000250" key="1"/>
<evidence type="ECO:0000255" key="2">
    <source>
        <dbReference type="PROSITE-ProRule" id="PRU00541"/>
    </source>
</evidence>
<evidence type="ECO:0000255" key="3">
    <source>
        <dbReference type="PROSITE-ProRule" id="PRU00542"/>
    </source>
</evidence>
<evidence type="ECO:0000256" key="4">
    <source>
        <dbReference type="SAM" id="MobiDB-lite"/>
    </source>
</evidence>
<evidence type="ECO:0000305" key="5"/>
<accession>Q0CNX1</accession>
<comment type="function">
    <text evidence="1">ATP-binding RNA helicase involved in 40S ribosomal subunit biogenesis and is required for the normal formation of 18S rRNAs through pre-rRNA processing at A0, A1 and A2 sites. Required for vegetative growth (By similarity).</text>
</comment>
<comment type="catalytic activity">
    <reaction>
        <text>ATP + H2O = ADP + phosphate + H(+)</text>
        <dbReference type="Rhea" id="RHEA:13065"/>
        <dbReference type="ChEBI" id="CHEBI:15377"/>
        <dbReference type="ChEBI" id="CHEBI:15378"/>
        <dbReference type="ChEBI" id="CHEBI:30616"/>
        <dbReference type="ChEBI" id="CHEBI:43474"/>
        <dbReference type="ChEBI" id="CHEBI:456216"/>
        <dbReference type="EC" id="3.6.4.13"/>
    </reaction>
</comment>
<comment type="subcellular location">
    <subcellularLocation>
        <location evidence="1">Nucleus</location>
        <location evidence="1">Nucleolus</location>
    </subcellularLocation>
</comment>
<comment type="domain">
    <text>The Q motif is unique to and characteristic of the DEAD box family of RNA helicases and controls ATP binding and hydrolysis.</text>
</comment>
<comment type="similarity">
    <text evidence="5">Belongs to the DEAD box helicase family. DDX49/DBP8 subfamily.</text>
</comment>
<feature type="chain" id="PRO_0000281711" description="ATP-dependent RNA helicase dbp8">
    <location>
        <begin position="1"/>
        <end position="527"/>
    </location>
</feature>
<feature type="domain" description="Helicase ATP-binding" evidence="2">
    <location>
        <begin position="117"/>
        <end position="296"/>
    </location>
</feature>
<feature type="domain" description="Helicase C-terminal" evidence="3">
    <location>
        <begin position="324"/>
        <end position="486"/>
    </location>
</feature>
<feature type="region of interest" description="Disordered" evidence="4">
    <location>
        <begin position="1"/>
        <end position="70"/>
    </location>
</feature>
<feature type="short sequence motif" description="Q motif">
    <location>
        <begin position="86"/>
        <end position="114"/>
    </location>
</feature>
<feature type="short sequence motif" description="DEAD box">
    <location>
        <begin position="239"/>
        <end position="242"/>
    </location>
</feature>
<feature type="compositionally biased region" description="Basic and acidic residues" evidence="4">
    <location>
        <begin position="1"/>
        <end position="16"/>
    </location>
</feature>
<feature type="binding site" evidence="2">
    <location>
        <begin position="130"/>
        <end position="137"/>
    </location>
    <ligand>
        <name>ATP</name>
        <dbReference type="ChEBI" id="CHEBI:30616"/>
    </ligand>
</feature>
<name>DBP8_ASPTN</name>
<protein>
    <recommendedName>
        <fullName>ATP-dependent RNA helicase dbp8</fullName>
        <ecNumber>3.6.4.13</ecNumber>
    </recommendedName>
</protein>
<keyword id="KW-0067">ATP-binding</keyword>
<keyword id="KW-0347">Helicase</keyword>
<keyword id="KW-0378">Hydrolase</keyword>
<keyword id="KW-0547">Nucleotide-binding</keyword>
<keyword id="KW-0539">Nucleus</keyword>
<keyword id="KW-1185">Reference proteome</keyword>
<keyword id="KW-0690">Ribosome biogenesis</keyword>
<keyword id="KW-0694">RNA-binding</keyword>
<keyword id="KW-0698">rRNA processing</keyword>
<proteinExistence type="inferred from homology"/>
<reference key="1">
    <citation type="submission" date="2005-09" db="EMBL/GenBank/DDBJ databases">
        <title>Annotation of the Aspergillus terreus NIH2624 genome.</title>
        <authorList>
            <person name="Birren B.W."/>
            <person name="Lander E.S."/>
            <person name="Galagan J.E."/>
            <person name="Nusbaum C."/>
            <person name="Devon K."/>
            <person name="Henn M."/>
            <person name="Ma L.-J."/>
            <person name="Jaffe D.B."/>
            <person name="Butler J."/>
            <person name="Alvarez P."/>
            <person name="Gnerre S."/>
            <person name="Grabherr M."/>
            <person name="Kleber M."/>
            <person name="Mauceli E.W."/>
            <person name="Brockman W."/>
            <person name="Rounsley S."/>
            <person name="Young S.K."/>
            <person name="LaButti K."/>
            <person name="Pushparaj V."/>
            <person name="DeCaprio D."/>
            <person name="Crawford M."/>
            <person name="Koehrsen M."/>
            <person name="Engels R."/>
            <person name="Montgomery P."/>
            <person name="Pearson M."/>
            <person name="Howarth C."/>
            <person name="Larson L."/>
            <person name="Luoma S."/>
            <person name="White J."/>
            <person name="Alvarado L."/>
            <person name="Kodira C.D."/>
            <person name="Zeng Q."/>
            <person name="Oleary S."/>
            <person name="Yandava C."/>
            <person name="Denning D.W."/>
            <person name="Nierman W.C."/>
            <person name="Milne T."/>
            <person name="Madden K."/>
        </authorList>
    </citation>
    <scope>NUCLEOTIDE SEQUENCE [LARGE SCALE GENOMIC DNA]</scope>
    <source>
        <strain>NIH 2624 / FGSC A1156</strain>
    </source>
</reference>
<dbReference type="EC" id="3.6.4.13"/>
<dbReference type="EMBL" id="CH476599">
    <property type="protein sequence ID" value="EAU35060.1"/>
    <property type="molecule type" value="Genomic_DNA"/>
</dbReference>
<dbReference type="RefSeq" id="XP_001213791.1">
    <property type="nucleotide sequence ID" value="XM_001213791.1"/>
</dbReference>
<dbReference type="SMR" id="Q0CNX1"/>
<dbReference type="STRING" id="341663.Q0CNX1"/>
<dbReference type="EnsemblFungi" id="EAU35060">
    <property type="protein sequence ID" value="EAU35060"/>
    <property type="gene ID" value="ATEG_04613"/>
</dbReference>
<dbReference type="GeneID" id="4320029"/>
<dbReference type="VEuPathDB" id="FungiDB:ATEG_04613"/>
<dbReference type="eggNOG" id="KOG0340">
    <property type="taxonomic scope" value="Eukaryota"/>
</dbReference>
<dbReference type="HOGENOM" id="CLU_003041_1_1_1"/>
<dbReference type="OMA" id="IMIFTDT"/>
<dbReference type="OrthoDB" id="10261904at2759"/>
<dbReference type="Proteomes" id="UP000007963">
    <property type="component" value="Unassembled WGS sequence"/>
</dbReference>
<dbReference type="GO" id="GO:0005829">
    <property type="term" value="C:cytosol"/>
    <property type="evidence" value="ECO:0007669"/>
    <property type="project" value="TreeGrafter"/>
</dbReference>
<dbReference type="GO" id="GO:0005730">
    <property type="term" value="C:nucleolus"/>
    <property type="evidence" value="ECO:0007669"/>
    <property type="project" value="UniProtKB-SubCell"/>
</dbReference>
<dbReference type="GO" id="GO:0005524">
    <property type="term" value="F:ATP binding"/>
    <property type="evidence" value="ECO:0007669"/>
    <property type="project" value="UniProtKB-KW"/>
</dbReference>
<dbReference type="GO" id="GO:0016887">
    <property type="term" value="F:ATP hydrolysis activity"/>
    <property type="evidence" value="ECO:0007669"/>
    <property type="project" value="RHEA"/>
</dbReference>
<dbReference type="GO" id="GO:0003723">
    <property type="term" value="F:RNA binding"/>
    <property type="evidence" value="ECO:0007669"/>
    <property type="project" value="UniProtKB-KW"/>
</dbReference>
<dbReference type="GO" id="GO:0003724">
    <property type="term" value="F:RNA helicase activity"/>
    <property type="evidence" value="ECO:0007669"/>
    <property type="project" value="UniProtKB-EC"/>
</dbReference>
<dbReference type="GO" id="GO:0006364">
    <property type="term" value="P:rRNA processing"/>
    <property type="evidence" value="ECO:0007669"/>
    <property type="project" value="UniProtKB-KW"/>
</dbReference>
<dbReference type="CDD" id="cd17955">
    <property type="entry name" value="DEADc_DDX49"/>
    <property type="match status" value="1"/>
</dbReference>
<dbReference type="CDD" id="cd18787">
    <property type="entry name" value="SF2_C_DEAD"/>
    <property type="match status" value="1"/>
</dbReference>
<dbReference type="Gene3D" id="3.40.50.300">
    <property type="entry name" value="P-loop containing nucleotide triphosphate hydrolases"/>
    <property type="match status" value="2"/>
</dbReference>
<dbReference type="InterPro" id="IPR011545">
    <property type="entry name" value="DEAD/DEAH_box_helicase_dom"/>
</dbReference>
<dbReference type="InterPro" id="IPR050079">
    <property type="entry name" value="DEAD_box_RNA_helicase"/>
</dbReference>
<dbReference type="InterPro" id="IPR014001">
    <property type="entry name" value="Helicase_ATP-bd"/>
</dbReference>
<dbReference type="InterPro" id="IPR001650">
    <property type="entry name" value="Helicase_C-like"/>
</dbReference>
<dbReference type="InterPro" id="IPR027417">
    <property type="entry name" value="P-loop_NTPase"/>
</dbReference>
<dbReference type="InterPro" id="IPR000629">
    <property type="entry name" value="RNA-helicase_DEAD-box_CS"/>
</dbReference>
<dbReference type="InterPro" id="IPR014014">
    <property type="entry name" value="RNA_helicase_DEAD_Q_motif"/>
</dbReference>
<dbReference type="PANTHER" id="PTHR47959:SF24">
    <property type="entry name" value="ATP-DEPENDENT RNA HELICASE"/>
    <property type="match status" value="1"/>
</dbReference>
<dbReference type="PANTHER" id="PTHR47959">
    <property type="entry name" value="ATP-DEPENDENT RNA HELICASE RHLE-RELATED"/>
    <property type="match status" value="1"/>
</dbReference>
<dbReference type="Pfam" id="PF00270">
    <property type="entry name" value="DEAD"/>
    <property type="match status" value="1"/>
</dbReference>
<dbReference type="Pfam" id="PF00271">
    <property type="entry name" value="Helicase_C"/>
    <property type="match status" value="1"/>
</dbReference>
<dbReference type="SMART" id="SM00487">
    <property type="entry name" value="DEXDc"/>
    <property type="match status" value="1"/>
</dbReference>
<dbReference type="SMART" id="SM00490">
    <property type="entry name" value="HELICc"/>
    <property type="match status" value="1"/>
</dbReference>
<dbReference type="SUPFAM" id="SSF52540">
    <property type="entry name" value="P-loop containing nucleoside triphosphate hydrolases"/>
    <property type="match status" value="1"/>
</dbReference>
<dbReference type="PROSITE" id="PS00039">
    <property type="entry name" value="DEAD_ATP_HELICASE"/>
    <property type="match status" value="1"/>
</dbReference>
<dbReference type="PROSITE" id="PS51192">
    <property type="entry name" value="HELICASE_ATP_BIND_1"/>
    <property type="match status" value="1"/>
</dbReference>
<dbReference type="PROSITE" id="PS51194">
    <property type="entry name" value="HELICASE_CTER"/>
    <property type="match status" value="1"/>
</dbReference>
<dbReference type="PROSITE" id="PS51195">
    <property type="entry name" value="Q_MOTIF"/>
    <property type="match status" value="1"/>
</dbReference>